<reference key="1">
    <citation type="journal article" date="2006" name="Gene">
        <title>Adaptive selection of mitochondrial complex I subunits during primate radiation.</title>
        <authorList>
            <person name="Mishmar D."/>
            <person name="Ruiz-Pesini E."/>
            <person name="Mondragon-Palomino M."/>
            <person name="Procaccio V."/>
            <person name="Gaut B."/>
            <person name="Wallace D.C."/>
        </authorList>
    </citation>
    <scope>NUCLEOTIDE SEQUENCE [MRNA]</scope>
</reference>
<accession>Q0MQE0</accession>
<keyword id="KW-0007">Acetylation</keyword>
<keyword id="KW-0249">Electron transport</keyword>
<keyword id="KW-0472">Membrane</keyword>
<keyword id="KW-0496">Mitochondrion</keyword>
<keyword id="KW-0999">Mitochondrion inner membrane</keyword>
<keyword id="KW-1185">Reference proteome</keyword>
<keyword id="KW-0679">Respiratory chain</keyword>
<keyword id="KW-0812">Transmembrane</keyword>
<keyword id="KW-1133">Transmembrane helix</keyword>
<keyword id="KW-0813">Transport</keyword>
<evidence type="ECO:0000250" key="1">
    <source>
        <dbReference type="UniProtKB" id="O95139"/>
    </source>
</evidence>
<evidence type="ECO:0000250" key="2">
    <source>
        <dbReference type="UniProtKB" id="Q3UIU2"/>
    </source>
</evidence>
<evidence type="ECO:0000255" key="3"/>
<evidence type="ECO:0000305" key="4"/>
<name>NDUB6_GORGO</name>
<sequence>MTGYTPDEKLRLQQLRELRRRWLKDQELSPREPVLPPQKMGPMEKFWNKFLENKSPWRKMVHGVYQKSIFVFTHVLVPVWIIHYYMKYHVSEKPYGIVEKKSRIFPGDTILETGEVIPPMKEFPDQHH</sequence>
<organism>
    <name type="scientific">Gorilla gorilla gorilla</name>
    <name type="common">Western lowland gorilla</name>
    <dbReference type="NCBI Taxonomy" id="9595"/>
    <lineage>
        <taxon>Eukaryota</taxon>
        <taxon>Metazoa</taxon>
        <taxon>Chordata</taxon>
        <taxon>Craniata</taxon>
        <taxon>Vertebrata</taxon>
        <taxon>Euteleostomi</taxon>
        <taxon>Mammalia</taxon>
        <taxon>Eutheria</taxon>
        <taxon>Euarchontoglires</taxon>
        <taxon>Primates</taxon>
        <taxon>Haplorrhini</taxon>
        <taxon>Catarrhini</taxon>
        <taxon>Hominidae</taxon>
        <taxon>Gorilla</taxon>
    </lineage>
</organism>
<feature type="initiator methionine" description="Removed" evidence="1">
    <location>
        <position position="1"/>
    </location>
</feature>
<feature type="chain" id="PRO_0000251836" description="NADH dehydrogenase [ubiquinone] 1 beta subcomplex subunit 6">
    <location>
        <begin position="2"/>
        <end position="128"/>
    </location>
</feature>
<feature type="transmembrane region" description="Helical" evidence="3">
    <location>
        <begin position="68"/>
        <end position="86"/>
    </location>
</feature>
<feature type="modified residue" description="N-acetylthreonine" evidence="1">
    <location>
        <position position="2"/>
    </location>
</feature>
<feature type="modified residue" description="N6-acetyllysine" evidence="2">
    <location>
        <position position="24"/>
    </location>
</feature>
<comment type="function">
    <text evidence="1">Accessory subunit of the mitochondrial membrane respiratory chain NADH dehydrogenase (Complex I), that is believed not to be involved in catalysis. Complex I functions in the transfer of electrons from NADH to the respiratory chain. The immediate electron acceptor for the enzyme is believed to be ubiquinone.</text>
</comment>
<comment type="subunit">
    <text evidence="1">Complex I is composed of 45 different subunits.</text>
</comment>
<comment type="subcellular location">
    <subcellularLocation>
        <location evidence="1">Mitochondrion inner membrane</location>
        <topology evidence="3">Single-pass membrane protein</topology>
        <orientation evidence="1">Matrix side</orientation>
    </subcellularLocation>
</comment>
<comment type="similarity">
    <text evidence="4">Belongs to the complex I NDUFB6 subunit family.</text>
</comment>
<dbReference type="EMBL" id="DQ885694">
    <property type="protein sequence ID" value="ABH12203.1"/>
    <property type="molecule type" value="mRNA"/>
</dbReference>
<dbReference type="RefSeq" id="NP_001266692.1">
    <property type="nucleotide sequence ID" value="NM_001279763.1"/>
</dbReference>
<dbReference type="SMR" id="Q0MQE0"/>
<dbReference type="FunCoup" id="Q0MQE0">
    <property type="interactions" value="993"/>
</dbReference>
<dbReference type="STRING" id="9593.ENSGGOP00000010000"/>
<dbReference type="Ensembl" id="ENSGGOT00000064183.1">
    <property type="protein sequence ID" value="ENSGGOP00000051550.1"/>
    <property type="gene ID" value="ENSGGOG00000010253.3"/>
</dbReference>
<dbReference type="GeneID" id="101133566"/>
<dbReference type="KEGG" id="ggo:101133566"/>
<dbReference type="CTD" id="4712"/>
<dbReference type="eggNOG" id="KOG4633">
    <property type="taxonomic scope" value="Eukaryota"/>
</dbReference>
<dbReference type="GeneTree" id="ENSGT00390000007535"/>
<dbReference type="HOGENOM" id="CLU_171928_0_0_1"/>
<dbReference type="InParanoid" id="Q0MQE0"/>
<dbReference type="OMA" id="KYHVNTK"/>
<dbReference type="OrthoDB" id="10717at9604"/>
<dbReference type="Proteomes" id="UP000001519">
    <property type="component" value="Chromosome 9"/>
</dbReference>
<dbReference type="Bgee" id="ENSGGOG00000010253">
    <property type="expression patterns" value="Expressed in heart and 6 other cell types or tissues"/>
</dbReference>
<dbReference type="GO" id="GO:0005743">
    <property type="term" value="C:mitochondrial inner membrane"/>
    <property type="evidence" value="ECO:0007669"/>
    <property type="project" value="UniProtKB-SubCell"/>
</dbReference>
<dbReference type="GO" id="GO:0045271">
    <property type="term" value="C:respiratory chain complex I"/>
    <property type="evidence" value="ECO:0000250"/>
    <property type="project" value="UniProtKB"/>
</dbReference>
<dbReference type="GO" id="GO:0042775">
    <property type="term" value="P:mitochondrial ATP synthesis coupled electron transport"/>
    <property type="evidence" value="ECO:0000318"/>
    <property type="project" value="GO_Central"/>
</dbReference>
<dbReference type="GO" id="GO:0006120">
    <property type="term" value="P:mitochondrial electron transport, NADH to ubiquinone"/>
    <property type="evidence" value="ECO:0007669"/>
    <property type="project" value="InterPro"/>
</dbReference>
<dbReference type="InterPro" id="IPR019174">
    <property type="entry name" value="NADH_DH_b-subcmplx_su6"/>
</dbReference>
<dbReference type="PANTHER" id="PTHR15083">
    <property type="entry name" value="NADH DEHYDROGENASE [UBIQUINONE] 1 BETA SUBCOMPLEX SUBUNIT 6"/>
    <property type="match status" value="1"/>
</dbReference>
<dbReference type="PANTHER" id="PTHR15083:SF0">
    <property type="entry name" value="NADH DEHYDROGENASE [UBIQUINONE] 1 BETA SUBCOMPLEX SUBUNIT 6"/>
    <property type="match status" value="1"/>
</dbReference>
<dbReference type="Pfam" id="PF09782">
    <property type="entry name" value="NDUF_B6"/>
    <property type="match status" value="1"/>
</dbReference>
<proteinExistence type="evidence at transcript level"/>
<protein>
    <recommendedName>
        <fullName>NADH dehydrogenase [ubiquinone] 1 beta subcomplex subunit 6</fullName>
    </recommendedName>
    <alternativeName>
        <fullName>Complex I-B17</fullName>
        <shortName>CI-B17</shortName>
    </alternativeName>
    <alternativeName>
        <fullName>NADH-ubiquinone oxidoreductase B17 subunit</fullName>
    </alternativeName>
</protein>
<gene>
    <name type="primary">NDUFB6</name>
</gene>